<comment type="function">
    <text evidence="1">Catalyzes the attachment of glutamate to tRNA(Glu) in a two-step reaction: glutamate is first activated by ATP to form Glu-AMP and then transferred to the acceptor end of tRNA(Glu).</text>
</comment>
<comment type="catalytic activity">
    <reaction evidence="1">
        <text>tRNA(Glu) + L-glutamate + ATP = L-glutamyl-tRNA(Glu) + AMP + diphosphate</text>
        <dbReference type="Rhea" id="RHEA:23540"/>
        <dbReference type="Rhea" id="RHEA-COMP:9663"/>
        <dbReference type="Rhea" id="RHEA-COMP:9680"/>
        <dbReference type="ChEBI" id="CHEBI:29985"/>
        <dbReference type="ChEBI" id="CHEBI:30616"/>
        <dbReference type="ChEBI" id="CHEBI:33019"/>
        <dbReference type="ChEBI" id="CHEBI:78442"/>
        <dbReference type="ChEBI" id="CHEBI:78520"/>
        <dbReference type="ChEBI" id="CHEBI:456215"/>
        <dbReference type="EC" id="6.1.1.17"/>
    </reaction>
</comment>
<comment type="subunit">
    <text evidence="1">Monomer.</text>
</comment>
<comment type="subcellular location">
    <subcellularLocation>
        <location evidence="1">Cytoplasm</location>
    </subcellularLocation>
</comment>
<comment type="similarity">
    <text evidence="1">Belongs to the class-I aminoacyl-tRNA synthetase family. Glutamate--tRNA ligase type 1 subfamily.</text>
</comment>
<protein>
    <recommendedName>
        <fullName evidence="1">Glutamate--tRNA ligase 2</fullName>
        <ecNumber evidence="1">6.1.1.17</ecNumber>
    </recommendedName>
    <alternativeName>
        <fullName evidence="1">Glutamyl-tRNA synthetase 2</fullName>
        <shortName evidence="1">GluRS 2</shortName>
    </alternativeName>
</protein>
<sequence length="466" mass="51166">MTAPVVTRFAPSPTGFLHIGGARTALFNWLYARGRGGKFLLRIEDTDRARSTPEATQAILDGMAWLGLDHDGDIVSQFDNAARHAAVAMELLAAGKAYKCFATQEEISAFREAARADGRSTLYRSPWRDAAQEAHPDAPFVIRIKAPQEGETIIRDQVQGDVTIRNDQLDDMVLLRSDGTPVYMLAVVVDDHDMGVTHVIRGDDHLNNAARQMMIYNALGWDVPVWAHIPLIHGPDGKKLSKRHGALGAQEYQVMGYPAAGMRNYLARLGWSHGDDEFFTDAQAREWFDLDGIGKSPARFDTKKLENLCGQHIAASQDAALRQEAEAFRAVSGQPALTASQSHMLGKAMYCIKERAKTFPELIDKAHFALTQRPVTPDAKAAKSLDNVSRGILKELTPQLQNASWERENLEAILNAFAHSKDTKFGKLAGPLRAALAGRSVTPSVFDMMLVLGPEETCARLNDAAV</sequence>
<accession>Q163X3</accession>
<name>SYE2_ROSDO</name>
<reference key="1">
    <citation type="journal article" date="2007" name="J. Bacteriol.">
        <title>The complete genome sequence of Roseobacter denitrificans reveals a mixotrophic rather than photosynthetic metabolism.</title>
        <authorList>
            <person name="Swingley W.D."/>
            <person name="Sadekar S."/>
            <person name="Mastrian S.D."/>
            <person name="Matthies H.J."/>
            <person name="Hao J."/>
            <person name="Ramos H."/>
            <person name="Acharya C.R."/>
            <person name="Conrad A.L."/>
            <person name="Taylor H.L."/>
            <person name="Dejesa L.C."/>
            <person name="Shah M.K."/>
            <person name="O'Huallachain M.E."/>
            <person name="Lince M.T."/>
            <person name="Blankenship R.E."/>
            <person name="Beatty J.T."/>
            <person name="Touchman J.W."/>
        </authorList>
    </citation>
    <scope>NUCLEOTIDE SEQUENCE [LARGE SCALE GENOMIC DNA]</scope>
    <source>
        <strain>ATCC 33942 / OCh 114</strain>
    </source>
</reference>
<gene>
    <name evidence="1" type="primary">gltX2</name>
    <name type="ordered locus">RD1_3218</name>
</gene>
<feature type="chain" id="PRO_1000001953" description="Glutamate--tRNA ligase 2">
    <location>
        <begin position="1"/>
        <end position="466"/>
    </location>
</feature>
<feature type="short sequence motif" description="'HIGH' region" evidence="1">
    <location>
        <begin position="11"/>
        <end position="21"/>
    </location>
</feature>
<feature type="short sequence motif" description="'KMSKS' region" evidence="1">
    <location>
        <begin position="239"/>
        <end position="243"/>
    </location>
</feature>
<feature type="binding site" evidence="1">
    <location>
        <position position="242"/>
    </location>
    <ligand>
        <name>ATP</name>
        <dbReference type="ChEBI" id="CHEBI:30616"/>
    </ligand>
</feature>
<proteinExistence type="inferred from homology"/>
<organism>
    <name type="scientific">Roseobacter denitrificans (strain ATCC 33942 / OCh 114)</name>
    <name type="common">Erythrobacter sp. (strain OCh 114)</name>
    <name type="synonym">Roseobacter denitrificans</name>
    <dbReference type="NCBI Taxonomy" id="375451"/>
    <lineage>
        <taxon>Bacteria</taxon>
        <taxon>Pseudomonadati</taxon>
        <taxon>Pseudomonadota</taxon>
        <taxon>Alphaproteobacteria</taxon>
        <taxon>Rhodobacterales</taxon>
        <taxon>Roseobacteraceae</taxon>
        <taxon>Roseobacter</taxon>
    </lineage>
</organism>
<keyword id="KW-0030">Aminoacyl-tRNA synthetase</keyword>
<keyword id="KW-0067">ATP-binding</keyword>
<keyword id="KW-0963">Cytoplasm</keyword>
<keyword id="KW-0436">Ligase</keyword>
<keyword id="KW-0547">Nucleotide-binding</keyword>
<keyword id="KW-0648">Protein biosynthesis</keyword>
<keyword id="KW-1185">Reference proteome</keyword>
<evidence type="ECO:0000255" key="1">
    <source>
        <dbReference type="HAMAP-Rule" id="MF_00022"/>
    </source>
</evidence>
<dbReference type="EC" id="6.1.1.17" evidence="1"/>
<dbReference type="EMBL" id="CP000362">
    <property type="protein sequence ID" value="ABG32720.1"/>
    <property type="molecule type" value="Genomic_DNA"/>
</dbReference>
<dbReference type="RefSeq" id="WP_011569336.1">
    <property type="nucleotide sequence ID" value="NC_008209.1"/>
</dbReference>
<dbReference type="SMR" id="Q163X3"/>
<dbReference type="STRING" id="375451.RD1_3218"/>
<dbReference type="KEGG" id="rde:RD1_3218"/>
<dbReference type="eggNOG" id="COG0008">
    <property type="taxonomic scope" value="Bacteria"/>
</dbReference>
<dbReference type="HOGENOM" id="CLU_015768_6_0_5"/>
<dbReference type="OrthoDB" id="9807503at2"/>
<dbReference type="Proteomes" id="UP000007029">
    <property type="component" value="Chromosome"/>
</dbReference>
<dbReference type="GO" id="GO:0005829">
    <property type="term" value="C:cytosol"/>
    <property type="evidence" value="ECO:0007669"/>
    <property type="project" value="TreeGrafter"/>
</dbReference>
<dbReference type="GO" id="GO:0005524">
    <property type="term" value="F:ATP binding"/>
    <property type="evidence" value="ECO:0007669"/>
    <property type="project" value="UniProtKB-UniRule"/>
</dbReference>
<dbReference type="GO" id="GO:0004818">
    <property type="term" value="F:glutamate-tRNA ligase activity"/>
    <property type="evidence" value="ECO:0007669"/>
    <property type="project" value="UniProtKB-UniRule"/>
</dbReference>
<dbReference type="GO" id="GO:0000049">
    <property type="term" value="F:tRNA binding"/>
    <property type="evidence" value="ECO:0007669"/>
    <property type="project" value="InterPro"/>
</dbReference>
<dbReference type="GO" id="GO:0008270">
    <property type="term" value="F:zinc ion binding"/>
    <property type="evidence" value="ECO:0007669"/>
    <property type="project" value="InterPro"/>
</dbReference>
<dbReference type="GO" id="GO:0006424">
    <property type="term" value="P:glutamyl-tRNA aminoacylation"/>
    <property type="evidence" value="ECO:0007669"/>
    <property type="project" value="UniProtKB-UniRule"/>
</dbReference>
<dbReference type="CDD" id="cd00808">
    <property type="entry name" value="GluRS_core"/>
    <property type="match status" value="1"/>
</dbReference>
<dbReference type="FunFam" id="3.40.50.620:FF:000007">
    <property type="entry name" value="Glutamate--tRNA ligase"/>
    <property type="match status" value="1"/>
</dbReference>
<dbReference type="Gene3D" id="1.10.10.350">
    <property type="match status" value="1"/>
</dbReference>
<dbReference type="Gene3D" id="3.40.50.620">
    <property type="entry name" value="HUPs"/>
    <property type="match status" value="1"/>
</dbReference>
<dbReference type="HAMAP" id="MF_00022">
    <property type="entry name" value="Glu_tRNA_synth_type1"/>
    <property type="match status" value="1"/>
</dbReference>
<dbReference type="InterPro" id="IPR045462">
    <property type="entry name" value="aa-tRNA-synth_I_cd-bd"/>
</dbReference>
<dbReference type="InterPro" id="IPR020751">
    <property type="entry name" value="aa-tRNA-synth_I_codon-bd_sub2"/>
</dbReference>
<dbReference type="InterPro" id="IPR001412">
    <property type="entry name" value="aa-tRNA-synth_I_CS"/>
</dbReference>
<dbReference type="InterPro" id="IPR008925">
    <property type="entry name" value="aa_tRNA-synth_I_cd-bd_sf"/>
</dbReference>
<dbReference type="InterPro" id="IPR004527">
    <property type="entry name" value="Glu-tRNA-ligase_bac/mito"/>
</dbReference>
<dbReference type="InterPro" id="IPR000924">
    <property type="entry name" value="Glu/Gln-tRNA-synth"/>
</dbReference>
<dbReference type="InterPro" id="IPR020058">
    <property type="entry name" value="Glu/Gln-tRNA-synth_Ib_cat-dom"/>
</dbReference>
<dbReference type="InterPro" id="IPR049940">
    <property type="entry name" value="GluQ/Sye"/>
</dbReference>
<dbReference type="InterPro" id="IPR033910">
    <property type="entry name" value="GluRS_core"/>
</dbReference>
<dbReference type="InterPro" id="IPR014729">
    <property type="entry name" value="Rossmann-like_a/b/a_fold"/>
</dbReference>
<dbReference type="NCBIfam" id="TIGR00464">
    <property type="entry name" value="gltX_bact"/>
    <property type="match status" value="1"/>
</dbReference>
<dbReference type="PANTHER" id="PTHR43311">
    <property type="entry name" value="GLUTAMATE--TRNA LIGASE"/>
    <property type="match status" value="1"/>
</dbReference>
<dbReference type="PANTHER" id="PTHR43311:SF2">
    <property type="entry name" value="GLUTAMATE--TRNA LIGASE, MITOCHONDRIAL-RELATED"/>
    <property type="match status" value="1"/>
</dbReference>
<dbReference type="Pfam" id="PF19269">
    <property type="entry name" value="Anticodon_2"/>
    <property type="match status" value="1"/>
</dbReference>
<dbReference type="Pfam" id="PF00749">
    <property type="entry name" value="tRNA-synt_1c"/>
    <property type="match status" value="1"/>
</dbReference>
<dbReference type="PRINTS" id="PR00987">
    <property type="entry name" value="TRNASYNTHGLU"/>
</dbReference>
<dbReference type="SUPFAM" id="SSF48163">
    <property type="entry name" value="An anticodon-binding domain of class I aminoacyl-tRNA synthetases"/>
    <property type="match status" value="1"/>
</dbReference>
<dbReference type="SUPFAM" id="SSF52374">
    <property type="entry name" value="Nucleotidylyl transferase"/>
    <property type="match status" value="1"/>
</dbReference>
<dbReference type="PROSITE" id="PS00178">
    <property type="entry name" value="AA_TRNA_LIGASE_I"/>
    <property type="match status" value="1"/>
</dbReference>